<protein>
    <recommendedName>
        <fullName>Homeobox-leucine zipper protein HOX6</fullName>
    </recommendedName>
    <alternativeName>
        <fullName>HD-ZIP protein HOX6</fullName>
    </alternativeName>
    <alternativeName>
        <fullName>Homeodomain transcription factor HOX6</fullName>
    </alternativeName>
    <alternativeName>
        <fullName>OsHox6</fullName>
    </alternativeName>
</protein>
<reference key="1">
    <citation type="journal article" date="2005" name="Nature">
        <title>The map-based sequence of the rice genome.</title>
        <authorList>
            <consortium name="International rice genome sequencing project (IRGSP)"/>
        </authorList>
    </citation>
    <scope>NUCLEOTIDE SEQUENCE [LARGE SCALE GENOMIC DNA]</scope>
    <source>
        <strain>cv. Nipponbare</strain>
    </source>
</reference>
<reference key="2">
    <citation type="journal article" date="2008" name="Nucleic Acids Res.">
        <title>The rice annotation project database (RAP-DB): 2008 update.</title>
        <authorList>
            <consortium name="The rice annotation project (RAP)"/>
        </authorList>
    </citation>
    <scope>GENOME REANNOTATION</scope>
    <source>
        <strain>cv. Nipponbare</strain>
    </source>
</reference>
<reference key="3">
    <citation type="journal article" date="2013" name="Rice">
        <title>Improvement of the Oryza sativa Nipponbare reference genome using next generation sequence and optical map data.</title>
        <authorList>
            <person name="Kawahara Y."/>
            <person name="de la Bastide M."/>
            <person name="Hamilton J.P."/>
            <person name="Kanamori H."/>
            <person name="McCombie W.R."/>
            <person name="Ouyang S."/>
            <person name="Schwartz D.C."/>
            <person name="Tanaka T."/>
            <person name="Wu J."/>
            <person name="Zhou S."/>
            <person name="Childs K.L."/>
            <person name="Davidson R.M."/>
            <person name="Lin H."/>
            <person name="Quesada-Ocampo L."/>
            <person name="Vaillancourt B."/>
            <person name="Sakai H."/>
            <person name="Lee S.S."/>
            <person name="Kim J."/>
            <person name="Numa H."/>
            <person name="Itoh T."/>
            <person name="Buell C.R."/>
            <person name="Matsumoto T."/>
        </authorList>
    </citation>
    <scope>GENOME REANNOTATION</scope>
    <source>
        <strain>cv. Nipponbare</strain>
    </source>
</reference>
<reference key="4">
    <citation type="journal article" date="2003" name="Science">
        <title>Collection, mapping, and annotation of over 28,000 cDNA clones from japonica rice.</title>
        <authorList>
            <consortium name="The rice full-length cDNA consortium"/>
        </authorList>
    </citation>
    <scope>NUCLEOTIDE SEQUENCE [LARGE SCALE MRNA]</scope>
    <source>
        <strain>cv. Nipponbare</strain>
    </source>
</reference>
<reference key="5">
    <citation type="journal article" date="2000" name="Mol. Gen. Genet.">
        <title>HD-Zip proteins of families I and II from rice: interactions and functional properties.</title>
        <authorList>
            <person name="Meijer A.H."/>
            <person name="de Kam R.J."/>
            <person name="d'Erfurth I."/>
            <person name="Shen W.-B."/>
            <person name="Hoge J.H.C."/>
        </authorList>
    </citation>
    <scope>FUNCTION</scope>
    <scope>TISSUE SPECIFICITY</scope>
</reference>
<reference key="6">
    <citation type="journal article" date="2008" name="Plant Mol. Biol.">
        <title>A genome-wide survey of HD-Zip genes in rice and analysis of drought-responsive family members.</title>
        <authorList>
            <person name="Agalou A."/>
            <person name="Purwantomo S."/>
            <person name="Oevernaes E."/>
            <person name="Johannesson H."/>
            <person name="Zhu X."/>
            <person name="Estiati A."/>
            <person name="de Kam R.J."/>
            <person name="Engstroem P."/>
            <person name="Slamet-Loedin I.H."/>
            <person name="Zhu Z."/>
            <person name="Wang M."/>
            <person name="Xiong L."/>
            <person name="Meijer A.H."/>
            <person name="Ouwerkerk P.B.F."/>
        </authorList>
    </citation>
    <scope>TISSUE SPECIFICITY</scope>
    <scope>GENE FAMILY</scope>
    <scope>NOMENCLATURE</scope>
</reference>
<sequence length="249" mass="27300">MDGEEDSEWMMMDVGGKGGKGGGGGGAADRKKRFSEEQIKSLESMFATQTKLEPRQKLQLARELGLQPRQVAIWFQNKRARWKSKQLEREYSALRDDYDALLCSYESLKKEKLALIKQLEKLAEMLQEPRGKYGDNAGDDARSGGVAGMKKEEFVGAGGAATLYSSAEGGGTTTTTTAKLMPHFGSDDVDAGLFLRPSSQHHPPPPHAGAGFTSSEPAADHQSFNFHSSWPSSTEQTCSSTPWWEFESE</sequence>
<proteinExistence type="evidence at transcript level"/>
<feature type="chain" id="PRO_0000331685" description="Homeobox-leucine zipper protein HOX6">
    <location>
        <begin position="1"/>
        <end position="249"/>
    </location>
</feature>
<feature type="DNA-binding region" description="Homeobox" evidence="1">
    <location>
        <begin position="27"/>
        <end position="86"/>
    </location>
</feature>
<feature type="region of interest" description="Disordered" evidence="2">
    <location>
        <begin position="1"/>
        <end position="32"/>
    </location>
</feature>
<feature type="region of interest" description="Leucine-zipper">
    <location>
        <begin position="85"/>
        <end position="129"/>
    </location>
</feature>
<feature type="region of interest" description="Disordered" evidence="2">
    <location>
        <begin position="194"/>
        <end position="249"/>
    </location>
</feature>
<feature type="compositionally biased region" description="Gly residues" evidence="2">
    <location>
        <begin position="15"/>
        <end position="27"/>
    </location>
</feature>
<feature type="compositionally biased region" description="Polar residues" evidence="2">
    <location>
        <begin position="212"/>
        <end position="242"/>
    </location>
</feature>
<dbReference type="EMBL" id="AP005681">
    <property type="protein sequence ID" value="BAD46372.1"/>
    <property type="molecule type" value="Genomic_DNA"/>
</dbReference>
<dbReference type="EMBL" id="AP008215">
    <property type="protein sequence ID" value="BAF25650.1"/>
    <property type="status" value="ALT_SEQ"/>
    <property type="molecule type" value="Genomic_DNA"/>
</dbReference>
<dbReference type="EMBL" id="AP014965">
    <property type="protein sequence ID" value="BAT09072.1"/>
    <property type="molecule type" value="Genomic_DNA"/>
</dbReference>
<dbReference type="EMBL" id="AK059755">
    <property type="protein sequence ID" value="BAG87104.1"/>
    <property type="molecule type" value="mRNA"/>
</dbReference>
<dbReference type="EMBL" id="AK103160">
    <property type="protein sequence ID" value="BAG95926.1"/>
    <property type="molecule type" value="mRNA"/>
</dbReference>
<dbReference type="RefSeq" id="XP_015612316.1">
    <property type="nucleotide sequence ID" value="XM_015756830.1"/>
</dbReference>
<dbReference type="SMR" id="Q651Z5"/>
<dbReference type="FunCoup" id="Q651Z5">
    <property type="interactions" value="2"/>
</dbReference>
<dbReference type="IntAct" id="Q651Z5">
    <property type="interactions" value="1"/>
</dbReference>
<dbReference type="PaxDb" id="39947-Q651Z5"/>
<dbReference type="EnsemblPlants" id="Os09t0528200-01">
    <property type="protein sequence ID" value="Os09t0528200-01"/>
    <property type="gene ID" value="Os09g0528200"/>
</dbReference>
<dbReference type="EnsemblPlants" id="Os09t0528200-02">
    <property type="protein sequence ID" value="Os09t0528200-02"/>
    <property type="gene ID" value="Os09g0528200"/>
</dbReference>
<dbReference type="Gramene" id="Os09t0528200-01">
    <property type="protein sequence ID" value="Os09t0528200-01"/>
    <property type="gene ID" value="Os09g0528200"/>
</dbReference>
<dbReference type="Gramene" id="Os09t0528200-02">
    <property type="protein sequence ID" value="Os09t0528200-02"/>
    <property type="gene ID" value="Os09g0528200"/>
</dbReference>
<dbReference type="KEGG" id="dosa:Os09g0528200"/>
<dbReference type="eggNOG" id="KOG0483">
    <property type="taxonomic scope" value="Eukaryota"/>
</dbReference>
<dbReference type="HOGENOM" id="CLU_060842_3_1_1"/>
<dbReference type="InParanoid" id="Q651Z5"/>
<dbReference type="OMA" id="HEPRGKY"/>
<dbReference type="OrthoDB" id="6159439at2759"/>
<dbReference type="Proteomes" id="UP000000763">
    <property type="component" value="Chromosome 9"/>
</dbReference>
<dbReference type="Proteomes" id="UP000059680">
    <property type="component" value="Chromosome 9"/>
</dbReference>
<dbReference type="GO" id="GO:0005634">
    <property type="term" value="C:nucleus"/>
    <property type="evidence" value="ECO:0000318"/>
    <property type="project" value="GO_Central"/>
</dbReference>
<dbReference type="GO" id="GO:0000981">
    <property type="term" value="F:DNA-binding transcription factor activity, RNA polymerase II-specific"/>
    <property type="evidence" value="ECO:0007669"/>
    <property type="project" value="InterPro"/>
</dbReference>
<dbReference type="GO" id="GO:0043565">
    <property type="term" value="F:sequence-specific DNA binding"/>
    <property type="evidence" value="ECO:0000318"/>
    <property type="project" value="GO_Central"/>
</dbReference>
<dbReference type="GO" id="GO:0045893">
    <property type="term" value="P:positive regulation of DNA-templated transcription"/>
    <property type="evidence" value="ECO:0000318"/>
    <property type="project" value="GO_Central"/>
</dbReference>
<dbReference type="CDD" id="cd00086">
    <property type="entry name" value="homeodomain"/>
    <property type="match status" value="1"/>
</dbReference>
<dbReference type="FunFam" id="1.10.10.60:FF:000293">
    <property type="entry name" value="Homeobox-leucine zipper protein ATHB-7"/>
    <property type="match status" value="1"/>
</dbReference>
<dbReference type="Gene3D" id="1.10.10.60">
    <property type="entry name" value="Homeodomain-like"/>
    <property type="match status" value="1"/>
</dbReference>
<dbReference type="InterPro" id="IPR001356">
    <property type="entry name" value="HD"/>
</dbReference>
<dbReference type="InterPro" id="IPR045224">
    <property type="entry name" value="HDZip_class_I_plant"/>
</dbReference>
<dbReference type="InterPro" id="IPR017970">
    <property type="entry name" value="Homeobox_CS"/>
</dbReference>
<dbReference type="InterPro" id="IPR009057">
    <property type="entry name" value="Homeodomain-like_sf"/>
</dbReference>
<dbReference type="InterPro" id="IPR000047">
    <property type="entry name" value="HTH_motif"/>
</dbReference>
<dbReference type="InterPro" id="IPR003106">
    <property type="entry name" value="Leu_zip_homeo"/>
</dbReference>
<dbReference type="PANTHER" id="PTHR24326">
    <property type="entry name" value="HOMEOBOX-LEUCINE ZIPPER PROTEIN"/>
    <property type="match status" value="1"/>
</dbReference>
<dbReference type="PANTHER" id="PTHR24326:SF122">
    <property type="entry name" value="HOMEOBOX-LEUCINE ZIPPER PROTEIN HOX6"/>
    <property type="match status" value="1"/>
</dbReference>
<dbReference type="Pfam" id="PF02183">
    <property type="entry name" value="HALZ"/>
    <property type="match status" value="1"/>
</dbReference>
<dbReference type="Pfam" id="PF00046">
    <property type="entry name" value="Homeodomain"/>
    <property type="match status" value="1"/>
</dbReference>
<dbReference type="PRINTS" id="PR00031">
    <property type="entry name" value="HTHREPRESSR"/>
</dbReference>
<dbReference type="SMART" id="SM00389">
    <property type="entry name" value="HOX"/>
    <property type="match status" value="1"/>
</dbReference>
<dbReference type="SUPFAM" id="SSF46689">
    <property type="entry name" value="Homeodomain-like"/>
    <property type="match status" value="1"/>
</dbReference>
<dbReference type="PROSITE" id="PS00027">
    <property type="entry name" value="HOMEOBOX_1"/>
    <property type="match status" value="1"/>
</dbReference>
<dbReference type="PROSITE" id="PS50071">
    <property type="entry name" value="HOMEOBOX_2"/>
    <property type="match status" value="1"/>
</dbReference>
<organism>
    <name type="scientific">Oryza sativa subsp. japonica</name>
    <name type="common">Rice</name>
    <dbReference type="NCBI Taxonomy" id="39947"/>
    <lineage>
        <taxon>Eukaryota</taxon>
        <taxon>Viridiplantae</taxon>
        <taxon>Streptophyta</taxon>
        <taxon>Embryophyta</taxon>
        <taxon>Tracheophyta</taxon>
        <taxon>Spermatophyta</taxon>
        <taxon>Magnoliopsida</taxon>
        <taxon>Liliopsida</taxon>
        <taxon>Poales</taxon>
        <taxon>Poaceae</taxon>
        <taxon>BOP clade</taxon>
        <taxon>Oryzoideae</taxon>
        <taxon>Oryzeae</taxon>
        <taxon>Oryzinae</taxon>
        <taxon>Oryza</taxon>
        <taxon>Oryza sativa</taxon>
    </lineage>
</organism>
<name>HOX6_ORYSJ</name>
<gene>
    <name type="primary">HOX6</name>
    <name type="ordered locus">Os09g0528200</name>
    <name type="ordered locus">LOC_Os09g35910</name>
    <name type="ORF">OJ1439_F07.36</name>
</gene>
<evidence type="ECO:0000255" key="1">
    <source>
        <dbReference type="PROSITE-ProRule" id="PRU00108"/>
    </source>
</evidence>
<evidence type="ECO:0000256" key="2">
    <source>
        <dbReference type="SAM" id="MobiDB-lite"/>
    </source>
</evidence>
<evidence type="ECO:0000269" key="3">
    <source>
    </source>
</evidence>
<evidence type="ECO:0000269" key="4">
    <source>
    </source>
</evidence>
<evidence type="ECO:0000305" key="5"/>
<accession>Q651Z5</accession>
<accession>B7E407</accession>
<accession>Q0J065</accession>
<keyword id="KW-0238">DNA-binding</keyword>
<keyword id="KW-0371">Homeobox</keyword>
<keyword id="KW-0539">Nucleus</keyword>
<keyword id="KW-1185">Reference proteome</keyword>
<keyword id="KW-0804">Transcription</keyword>
<keyword id="KW-0805">Transcription regulation</keyword>
<comment type="function">
    <text evidence="3">Probable transcription factor that binds to the DNA sequence 5'-CAAT[AT]ATTG-3'.</text>
</comment>
<comment type="subcellular location">
    <subcellularLocation>
        <location evidence="5">Nucleus</location>
    </subcellularLocation>
</comment>
<comment type="tissue specificity">
    <text evidence="3 4">Expressed in seedlings, roots, leaves, nodes, internodes, flowers and embryo.</text>
</comment>
<comment type="similarity">
    <text evidence="5">Belongs to the HD-ZIP homeobox family. Class I subfamily.</text>
</comment>
<comment type="sequence caution" evidence="5">
    <conflict type="erroneous gene model prediction">
        <sequence resource="EMBL-CDS" id="BAF25650"/>
    </conflict>
</comment>